<comment type="function">
    <text evidence="1">Trans-acting transcriptional regulator of RuBisCO genes (rbcL and rbcS) expression.</text>
</comment>
<comment type="subcellular location">
    <subcellularLocation>
        <location>Plastid</location>
        <location>Chloroplast</location>
    </subcellularLocation>
</comment>
<comment type="similarity">
    <text evidence="3">Belongs to the LysR transcriptional regulatory family.</text>
</comment>
<feature type="chain" id="PRO_0000105770" description="Probable RuBisCO transcriptional regulator">
    <location>
        <begin position="1"/>
        <end position="317"/>
    </location>
</feature>
<feature type="domain" description="HTH lysR-type" evidence="2">
    <location>
        <begin position="6"/>
        <end position="63"/>
    </location>
</feature>
<feature type="DNA-binding region" description="H-T-H motif" evidence="2">
    <location>
        <begin position="23"/>
        <end position="42"/>
    </location>
</feature>
<evidence type="ECO:0000250" key="1"/>
<evidence type="ECO:0000255" key="2">
    <source>
        <dbReference type="PROSITE-ProRule" id="PRU00253"/>
    </source>
</evidence>
<evidence type="ECO:0000305" key="3"/>
<protein>
    <recommendedName>
        <fullName>Probable RuBisCO transcriptional regulator</fullName>
    </recommendedName>
</protein>
<organism>
    <name type="scientific">Cyanidium caldarium</name>
    <name type="common">Red alga</name>
    <dbReference type="NCBI Taxonomy" id="2771"/>
    <lineage>
        <taxon>Eukaryota</taxon>
        <taxon>Rhodophyta</taxon>
        <taxon>Bangiophyceae</taxon>
        <taxon>Cyanidiales</taxon>
        <taxon>Cyanidiaceae</taxon>
        <taxon>Cyanidium</taxon>
    </lineage>
</organism>
<gene>
    <name type="primary">rbcR</name>
    <name type="synonym">ycf30</name>
    <name type="synonym">ycf7</name>
</gene>
<reference key="1">
    <citation type="journal article" date="2000" name="J. Mol. Evol.">
        <title>The structure and gene repertoire of an ancient red algal plastid genome.</title>
        <authorList>
            <person name="Gloeckner G."/>
            <person name="Rosenthal A."/>
            <person name="Valentin K.-U."/>
        </authorList>
    </citation>
    <scope>NUCLEOTIDE SEQUENCE [LARGE SCALE GENOMIC DNA]</scope>
    <source>
        <strain>RK-1</strain>
    </source>
</reference>
<name>RBCR_CYACA</name>
<dbReference type="EMBL" id="AF022186">
    <property type="protein sequence ID" value="AAB82697.1"/>
    <property type="molecule type" value="Genomic_DNA"/>
</dbReference>
<dbReference type="PIR" id="T11960">
    <property type="entry name" value="T11960"/>
</dbReference>
<dbReference type="RefSeq" id="NP_045064.1">
    <property type="nucleotide sequence ID" value="NC_001840.1"/>
</dbReference>
<dbReference type="SMR" id="O19892"/>
<dbReference type="GeneID" id="800283"/>
<dbReference type="GO" id="GO:0009507">
    <property type="term" value="C:chloroplast"/>
    <property type="evidence" value="ECO:0007669"/>
    <property type="project" value="UniProtKB-SubCell"/>
</dbReference>
<dbReference type="GO" id="GO:0003700">
    <property type="term" value="F:DNA-binding transcription factor activity"/>
    <property type="evidence" value="ECO:0007669"/>
    <property type="project" value="InterPro"/>
</dbReference>
<dbReference type="GO" id="GO:0000976">
    <property type="term" value="F:transcription cis-regulatory region binding"/>
    <property type="evidence" value="ECO:0007669"/>
    <property type="project" value="TreeGrafter"/>
</dbReference>
<dbReference type="CDD" id="cd08420">
    <property type="entry name" value="PBP2_CysL_like"/>
    <property type="match status" value="1"/>
</dbReference>
<dbReference type="FunFam" id="1.10.10.10:FF:000001">
    <property type="entry name" value="LysR family transcriptional regulator"/>
    <property type="match status" value="1"/>
</dbReference>
<dbReference type="Gene3D" id="3.40.190.290">
    <property type="match status" value="1"/>
</dbReference>
<dbReference type="Gene3D" id="1.10.10.10">
    <property type="entry name" value="Winged helix-like DNA-binding domain superfamily/Winged helix DNA-binding domain"/>
    <property type="match status" value="1"/>
</dbReference>
<dbReference type="InterPro" id="IPR005119">
    <property type="entry name" value="LysR_subst-bd"/>
</dbReference>
<dbReference type="InterPro" id="IPR000847">
    <property type="entry name" value="Tscrpt_reg_HTH_LysR"/>
</dbReference>
<dbReference type="InterPro" id="IPR036388">
    <property type="entry name" value="WH-like_DNA-bd_sf"/>
</dbReference>
<dbReference type="InterPro" id="IPR036390">
    <property type="entry name" value="WH_DNA-bd_sf"/>
</dbReference>
<dbReference type="PANTHER" id="PTHR30126">
    <property type="entry name" value="HTH-TYPE TRANSCRIPTIONAL REGULATOR"/>
    <property type="match status" value="1"/>
</dbReference>
<dbReference type="PANTHER" id="PTHR30126:SF39">
    <property type="entry name" value="HTH-TYPE TRANSCRIPTIONAL REGULATOR CYSL"/>
    <property type="match status" value="1"/>
</dbReference>
<dbReference type="Pfam" id="PF00126">
    <property type="entry name" value="HTH_1"/>
    <property type="match status" value="1"/>
</dbReference>
<dbReference type="Pfam" id="PF03466">
    <property type="entry name" value="LysR_substrate"/>
    <property type="match status" value="1"/>
</dbReference>
<dbReference type="PRINTS" id="PR00039">
    <property type="entry name" value="HTHLYSR"/>
</dbReference>
<dbReference type="SUPFAM" id="SSF53850">
    <property type="entry name" value="Periplasmic binding protein-like II"/>
    <property type="match status" value="1"/>
</dbReference>
<dbReference type="SUPFAM" id="SSF46785">
    <property type="entry name" value="Winged helix' DNA-binding domain"/>
    <property type="match status" value="1"/>
</dbReference>
<dbReference type="PROSITE" id="PS50931">
    <property type="entry name" value="HTH_LYSR"/>
    <property type="match status" value="1"/>
</dbReference>
<sequence length="317" mass="35747">MTDLPFTLDQLRILRAILIQGSFKKAATSLYISQPAVSSHVHNIEKQLNIQLFDRSHRNAQLTEAGQLLLKYGGRILALCEETCRALEDLQNLQCGNLIIGASQTTGTYLMPKLIGLFRQKYPQISVQLQVHSTRRISWSVANGQLDLAIIGGEVPKELTEILEVRNFVEDELTLILPPSHPFSKFSCIQKEDLYRLRFIALDKNSTIRKVIDKILNRNGIDSSRLKTEMELSSIEAIKNAVQSGLGASFVSISAIDKELKLQLLNRVNIDKIKIKRMLSIITNYSRYRSKASETFCHEILGLLVNLPFKNAPSTEK</sequence>
<proteinExistence type="inferred from homology"/>
<keyword id="KW-0150">Chloroplast</keyword>
<keyword id="KW-0238">DNA-binding</keyword>
<keyword id="KW-0934">Plastid</keyword>
<keyword id="KW-0804">Transcription</keyword>
<keyword id="KW-0805">Transcription regulation</keyword>
<geneLocation type="chloroplast"/>
<accession>O19892</accession>